<protein>
    <recommendedName>
        <fullName>Putative metal ABC transporter substrate-binding protein Hpf</fullName>
    </recommendedName>
    <alternativeName>
        <fullName>Surface-adhesin protein F</fullName>
    </alternativeName>
</protein>
<reference key="1">
    <citation type="journal article" date="2007" name="Genome Biol.">
        <title>Characterization and modeling of the Haemophilus influenzae core and supragenomes based on the complete genomic sequences of Rd and 12 clinical nontypeable strains.</title>
        <authorList>
            <person name="Hogg J.S."/>
            <person name="Hu F.Z."/>
            <person name="Janto B."/>
            <person name="Boissy R."/>
            <person name="Hayes J."/>
            <person name="Keefe R."/>
            <person name="Post J.C."/>
            <person name="Ehrlich G.D."/>
        </authorList>
    </citation>
    <scope>NUCLEOTIDE SEQUENCE [LARGE SCALE GENOMIC DNA]</scope>
    <source>
        <strain>NTHi 3655</strain>
    </source>
</reference>
<reference key="2">
    <citation type="journal article" date="2013" name="J. Infect. Dis.">
        <title>Haemophilus influenzae protein F mediates binding to laminin and human pulmonary epithelial cells.</title>
        <authorList>
            <person name="Jalalvand F."/>
            <person name="Su Y.C."/>
            <person name="Morgelin M."/>
            <person name="Brant M."/>
            <person name="Hallgren O."/>
            <person name="Westergren-Thorsson G."/>
            <person name="Singh B."/>
            <person name="Riesbeck K."/>
        </authorList>
    </citation>
    <scope>FUNCTION IN VIRULENCE</scope>
    <scope>INTERACTION WITH LAMININ</scope>
    <scope>SUBCELLULAR LOCATION</scope>
    <scope>DISRUPTION PHENOTYPE</scope>
    <source>
        <strain>NTHi 3655</strain>
    </source>
</reference>
<reference key="3">
    <citation type="journal article" date="2013" name="Mol. Microbiol.">
        <title>Haemophilus influenzae acquires vitronectin via the ubiquitous Protein F to subvert host innate immunity.</title>
        <authorList>
            <person name="Su Y.C."/>
            <person name="Jalalvand F."/>
            <person name="Morgelin M."/>
            <person name="Blom A.M."/>
            <person name="Singh B."/>
            <person name="Riesbeck K."/>
        </authorList>
    </citation>
    <scope>FUNCTION IN VIRULENCE</scope>
    <scope>INTERACTION WITH VITRONECTIN</scope>
    <scope>SUBCELLULAR LOCATION</scope>
    <scope>DISRUPTION PHENOTYPE</scope>
    <source>
        <strain>NTHi 3655</strain>
    </source>
</reference>
<comment type="function">
    <text evidence="2 5 6">Part of an ATP-binding cassette (ABC) transport system involved in metal import (By similarity). Binds a metal with high affinity and specificity and delivers it to the membrane permease for translocation into the cytoplasm (By similarity). Acts as an adhesin that promotes binding of H.influenzae to host laminin and vitronectin (PubMed:23230060, PubMed:23387957). In addition, interaction with serum vitronectin plays an important role in bacterial serum resistance (PubMed:23230060, PubMed:23387957).</text>
</comment>
<comment type="subunit">
    <text evidence="5 6">Interacts with host laminin and vitronectin. Can interact with both immobilized and soluble vitronectin.</text>
</comment>
<comment type="subcellular location">
    <subcellularLocation>
        <location evidence="5 6">Cell outer membrane</location>
    </subcellularLocation>
    <subcellularLocation>
        <location evidence="5 6">Cell surface</location>
    </subcellularLocation>
    <subcellularLocation>
        <location evidence="3">Periplasm</location>
    </subcellularLocation>
</comment>
<comment type="disruption phenotype">
    <text evidence="5 6">Mutant displays a reduced binding to laminin, vitronectin, and epithelial cells, and is more sensitive to killing by human serum compared with the wild type.</text>
</comment>
<comment type="similarity">
    <text evidence="7">Belongs to the bacterial solute-binding protein 9 family.</text>
</comment>
<proteinExistence type="evidence at protein level"/>
<sequence length="293" mass="32463">MRNSFKIMTALALGLFAMQANAKFKVVTTFTVIQDIAQNVAGNAATVESITKPGAEIHEYEPTPKDIVKAQSADLILWNGLNLERWFERFFQNVKDKPAVVVTEGIQPLSIYEGPYKDAPNPHAWMSPSNALIYIENIKNALVKYDPQNAAVYEKNAADYAQKIKQLDEPLRAKLAQIPEAQRWLVTSEGAFSYLAKDYNLKEGYLWPINAEQQGTPQQVRKVIDLVRKNNIPVVFSESTISAKPAQQVAKESGAKYGGVLYVDSLSAKNGPVPTYIDLLNVTVSTIVKGFGK</sequence>
<evidence type="ECO:0000250" key="1">
    <source>
        <dbReference type="UniProtKB" id="A1B2F3"/>
    </source>
</evidence>
<evidence type="ECO:0000250" key="2">
    <source>
        <dbReference type="UniProtKB" id="Q56952"/>
    </source>
</evidence>
<evidence type="ECO:0000250" key="3">
    <source>
        <dbReference type="UniProtKB" id="Q57449"/>
    </source>
</evidence>
<evidence type="ECO:0000255" key="4"/>
<evidence type="ECO:0000269" key="5">
    <source>
    </source>
</evidence>
<evidence type="ECO:0000269" key="6">
    <source>
    </source>
</evidence>
<evidence type="ECO:0000305" key="7"/>
<feature type="signal peptide" evidence="4">
    <location>
        <begin position="1"/>
        <end position="22"/>
    </location>
</feature>
<feature type="chain" id="PRO_0000424420" description="Putative metal ABC transporter substrate-binding protein Hpf">
    <location>
        <begin position="23"/>
        <end position="293"/>
    </location>
</feature>
<feature type="region of interest" description="Interaction with host components">
    <location>
        <begin position="23"/>
        <end position="48"/>
    </location>
</feature>
<feature type="binding site" evidence="1">
    <location>
        <position position="58"/>
    </location>
    <ligand>
        <name>a divalent metal cation</name>
        <dbReference type="ChEBI" id="CHEBI:60240"/>
    </ligand>
</feature>
<feature type="binding site" evidence="1">
    <location>
        <position position="123"/>
    </location>
    <ligand>
        <name>a divalent metal cation</name>
        <dbReference type="ChEBI" id="CHEBI:60240"/>
    </ligand>
</feature>
<feature type="binding site" evidence="1">
    <location>
        <position position="189"/>
    </location>
    <ligand>
        <name>a divalent metal cation</name>
        <dbReference type="ChEBI" id="CHEBI:60240"/>
    </ligand>
</feature>
<feature type="binding site" evidence="1">
    <location>
        <position position="264"/>
    </location>
    <ligand>
        <name>a divalent metal cation</name>
        <dbReference type="ChEBI" id="CHEBI:60240"/>
    </ligand>
</feature>
<dbReference type="EMBL" id="AAZF01000002">
    <property type="protein sequence ID" value="EDJ93357.1"/>
    <property type="molecule type" value="Genomic_DNA"/>
</dbReference>
<dbReference type="SMR" id="A4N8V8"/>
<dbReference type="Proteomes" id="UP000003185">
    <property type="component" value="Unassembled WGS sequence"/>
</dbReference>
<dbReference type="GO" id="GO:0009279">
    <property type="term" value="C:cell outer membrane"/>
    <property type="evidence" value="ECO:0007669"/>
    <property type="project" value="UniProtKB-SubCell"/>
</dbReference>
<dbReference type="GO" id="GO:0009986">
    <property type="term" value="C:cell surface"/>
    <property type="evidence" value="ECO:0007669"/>
    <property type="project" value="UniProtKB-SubCell"/>
</dbReference>
<dbReference type="GO" id="GO:0042597">
    <property type="term" value="C:periplasmic space"/>
    <property type="evidence" value="ECO:0007669"/>
    <property type="project" value="UniProtKB-SubCell"/>
</dbReference>
<dbReference type="GO" id="GO:0046872">
    <property type="term" value="F:metal ion binding"/>
    <property type="evidence" value="ECO:0007669"/>
    <property type="project" value="UniProtKB-KW"/>
</dbReference>
<dbReference type="GO" id="GO:0007155">
    <property type="term" value="P:cell adhesion"/>
    <property type="evidence" value="ECO:0007669"/>
    <property type="project" value="InterPro"/>
</dbReference>
<dbReference type="GO" id="GO:0030001">
    <property type="term" value="P:metal ion transport"/>
    <property type="evidence" value="ECO:0007669"/>
    <property type="project" value="InterPro"/>
</dbReference>
<dbReference type="CDD" id="cd01137">
    <property type="entry name" value="PsaA"/>
    <property type="match status" value="1"/>
</dbReference>
<dbReference type="Gene3D" id="3.40.50.1980">
    <property type="entry name" value="Nitrogenase molybdenum iron protein domain"/>
    <property type="match status" value="2"/>
</dbReference>
<dbReference type="InterPro" id="IPR006129">
    <property type="entry name" value="AdhesinB"/>
</dbReference>
<dbReference type="InterPro" id="IPR050492">
    <property type="entry name" value="Bact_metal-bind_prot9"/>
</dbReference>
<dbReference type="InterPro" id="IPR006128">
    <property type="entry name" value="Lipoprotein_PsaA-like"/>
</dbReference>
<dbReference type="InterPro" id="IPR006127">
    <property type="entry name" value="ZnuA-like"/>
</dbReference>
<dbReference type="PANTHER" id="PTHR42953">
    <property type="entry name" value="HIGH-AFFINITY ZINC UPTAKE SYSTEM PROTEIN ZNUA-RELATED"/>
    <property type="match status" value="1"/>
</dbReference>
<dbReference type="PANTHER" id="PTHR42953:SF1">
    <property type="entry name" value="METAL-BINDING PROTEIN HI_0362-RELATED"/>
    <property type="match status" value="1"/>
</dbReference>
<dbReference type="Pfam" id="PF01297">
    <property type="entry name" value="ZnuA"/>
    <property type="match status" value="1"/>
</dbReference>
<dbReference type="PRINTS" id="PR00691">
    <property type="entry name" value="ADHESINB"/>
</dbReference>
<dbReference type="PRINTS" id="PR00690">
    <property type="entry name" value="ADHESNFAMILY"/>
</dbReference>
<dbReference type="SUPFAM" id="SSF53807">
    <property type="entry name" value="Helical backbone' metal receptor"/>
    <property type="match status" value="1"/>
</dbReference>
<name>HPF_HAEI3</name>
<organism>
    <name type="scientific">Haemophilus influenzae (strain NTHi 3655)</name>
    <dbReference type="NCBI Taxonomy" id="375177"/>
    <lineage>
        <taxon>Bacteria</taxon>
        <taxon>Pseudomonadati</taxon>
        <taxon>Pseudomonadota</taxon>
        <taxon>Gammaproteobacteria</taxon>
        <taxon>Pasteurellales</taxon>
        <taxon>Pasteurellaceae</taxon>
        <taxon>Haemophilus</taxon>
    </lineage>
</organism>
<gene>
    <name type="primary">hpf</name>
    <name type="ORF">CGSHi3655_02309</name>
</gene>
<keyword id="KW-0998">Cell outer membrane</keyword>
<keyword id="KW-0472">Membrane</keyword>
<keyword id="KW-0479">Metal-binding</keyword>
<keyword id="KW-0574">Periplasm</keyword>
<keyword id="KW-0732">Signal</keyword>
<keyword id="KW-0813">Transport</keyword>
<keyword id="KW-0843">Virulence</keyword>
<accession>A4N8V8</accession>